<dbReference type="EC" id="7.1.2.2" evidence="1"/>
<dbReference type="EMBL" id="AL954747">
    <property type="protein sequence ID" value="CAD84117.1"/>
    <property type="molecule type" value="Genomic_DNA"/>
</dbReference>
<dbReference type="RefSeq" id="WP_011110851.1">
    <property type="nucleotide sequence ID" value="NC_004757.1"/>
</dbReference>
<dbReference type="SMR" id="Q82XP8"/>
<dbReference type="STRING" id="228410.NE0206"/>
<dbReference type="GeneID" id="87103413"/>
<dbReference type="KEGG" id="neu:NE0206"/>
<dbReference type="eggNOG" id="COG0055">
    <property type="taxonomic scope" value="Bacteria"/>
</dbReference>
<dbReference type="HOGENOM" id="CLU_022398_0_2_4"/>
<dbReference type="OrthoDB" id="9801639at2"/>
<dbReference type="PhylomeDB" id="Q82XP8"/>
<dbReference type="Proteomes" id="UP000001416">
    <property type="component" value="Chromosome"/>
</dbReference>
<dbReference type="GO" id="GO:0005886">
    <property type="term" value="C:plasma membrane"/>
    <property type="evidence" value="ECO:0007669"/>
    <property type="project" value="UniProtKB-SubCell"/>
</dbReference>
<dbReference type="GO" id="GO:0045259">
    <property type="term" value="C:proton-transporting ATP synthase complex"/>
    <property type="evidence" value="ECO:0007669"/>
    <property type="project" value="UniProtKB-KW"/>
</dbReference>
<dbReference type="GO" id="GO:0005524">
    <property type="term" value="F:ATP binding"/>
    <property type="evidence" value="ECO:0007669"/>
    <property type="project" value="UniProtKB-UniRule"/>
</dbReference>
<dbReference type="GO" id="GO:0016887">
    <property type="term" value="F:ATP hydrolysis activity"/>
    <property type="evidence" value="ECO:0007669"/>
    <property type="project" value="InterPro"/>
</dbReference>
<dbReference type="GO" id="GO:0046933">
    <property type="term" value="F:proton-transporting ATP synthase activity, rotational mechanism"/>
    <property type="evidence" value="ECO:0007669"/>
    <property type="project" value="UniProtKB-UniRule"/>
</dbReference>
<dbReference type="CDD" id="cd18110">
    <property type="entry name" value="ATP-synt_F1_beta_C"/>
    <property type="match status" value="1"/>
</dbReference>
<dbReference type="CDD" id="cd18115">
    <property type="entry name" value="ATP-synt_F1_beta_N"/>
    <property type="match status" value="1"/>
</dbReference>
<dbReference type="CDD" id="cd01133">
    <property type="entry name" value="F1-ATPase_beta_CD"/>
    <property type="match status" value="1"/>
</dbReference>
<dbReference type="FunFam" id="1.10.1140.10:FF:000001">
    <property type="entry name" value="ATP synthase subunit beta"/>
    <property type="match status" value="1"/>
</dbReference>
<dbReference type="FunFam" id="3.40.50.300:FF:000004">
    <property type="entry name" value="ATP synthase subunit beta"/>
    <property type="match status" value="1"/>
</dbReference>
<dbReference type="Gene3D" id="2.40.10.170">
    <property type="match status" value="1"/>
</dbReference>
<dbReference type="Gene3D" id="1.10.1140.10">
    <property type="entry name" value="Bovine Mitochondrial F1-atpase, Atp Synthase Beta Chain, Chain D, domain 3"/>
    <property type="match status" value="1"/>
</dbReference>
<dbReference type="Gene3D" id="3.40.50.300">
    <property type="entry name" value="P-loop containing nucleotide triphosphate hydrolases"/>
    <property type="match status" value="1"/>
</dbReference>
<dbReference type="HAMAP" id="MF_01347">
    <property type="entry name" value="ATP_synth_beta_bact"/>
    <property type="match status" value="1"/>
</dbReference>
<dbReference type="InterPro" id="IPR003593">
    <property type="entry name" value="AAA+_ATPase"/>
</dbReference>
<dbReference type="InterPro" id="IPR055190">
    <property type="entry name" value="ATP-synt_VA_C"/>
</dbReference>
<dbReference type="InterPro" id="IPR005722">
    <property type="entry name" value="ATP_synth_F1_bsu"/>
</dbReference>
<dbReference type="InterPro" id="IPR020003">
    <property type="entry name" value="ATPase_a/bsu_AS"/>
</dbReference>
<dbReference type="InterPro" id="IPR050053">
    <property type="entry name" value="ATPase_alpha/beta_chains"/>
</dbReference>
<dbReference type="InterPro" id="IPR004100">
    <property type="entry name" value="ATPase_F1/V1/A1_a/bsu_N"/>
</dbReference>
<dbReference type="InterPro" id="IPR036121">
    <property type="entry name" value="ATPase_F1/V1/A1_a/bsu_N_sf"/>
</dbReference>
<dbReference type="InterPro" id="IPR000194">
    <property type="entry name" value="ATPase_F1/V1/A1_a/bsu_nucl-bd"/>
</dbReference>
<dbReference type="InterPro" id="IPR024034">
    <property type="entry name" value="ATPase_F1/V1_b/a_C"/>
</dbReference>
<dbReference type="InterPro" id="IPR027417">
    <property type="entry name" value="P-loop_NTPase"/>
</dbReference>
<dbReference type="NCBIfam" id="TIGR01039">
    <property type="entry name" value="atpD"/>
    <property type="match status" value="1"/>
</dbReference>
<dbReference type="PANTHER" id="PTHR15184">
    <property type="entry name" value="ATP SYNTHASE"/>
    <property type="match status" value="1"/>
</dbReference>
<dbReference type="PANTHER" id="PTHR15184:SF71">
    <property type="entry name" value="ATP SYNTHASE SUBUNIT BETA, MITOCHONDRIAL"/>
    <property type="match status" value="1"/>
</dbReference>
<dbReference type="Pfam" id="PF00006">
    <property type="entry name" value="ATP-synt_ab"/>
    <property type="match status" value="1"/>
</dbReference>
<dbReference type="Pfam" id="PF02874">
    <property type="entry name" value="ATP-synt_ab_N"/>
    <property type="match status" value="1"/>
</dbReference>
<dbReference type="Pfam" id="PF22919">
    <property type="entry name" value="ATP-synt_VA_C"/>
    <property type="match status" value="1"/>
</dbReference>
<dbReference type="SMART" id="SM00382">
    <property type="entry name" value="AAA"/>
    <property type="match status" value="1"/>
</dbReference>
<dbReference type="SUPFAM" id="SSF47917">
    <property type="entry name" value="C-terminal domain of alpha and beta subunits of F1 ATP synthase"/>
    <property type="match status" value="1"/>
</dbReference>
<dbReference type="SUPFAM" id="SSF50615">
    <property type="entry name" value="N-terminal domain of alpha and beta subunits of F1 ATP synthase"/>
    <property type="match status" value="1"/>
</dbReference>
<dbReference type="SUPFAM" id="SSF52540">
    <property type="entry name" value="P-loop containing nucleoside triphosphate hydrolases"/>
    <property type="match status" value="1"/>
</dbReference>
<dbReference type="PROSITE" id="PS00152">
    <property type="entry name" value="ATPASE_ALPHA_BETA"/>
    <property type="match status" value="1"/>
</dbReference>
<organism>
    <name type="scientific">Nitrosomonas europaea (strain ATCC 19718 / CIP 103999 / KCTC 2705 / NBRC 14298)</name>
    <dbReference type="NCBI Taxonomy" id="228410"/>
    <lineage>
        <taxon>Bacteria</taxon>
        <taxon>Pseudomonadati</taxon>
        <taxon>Pseudomonadota</taxon>
        <taxon>Betaproteobacteria</taxon>
        <taxon>Nitrosomonadales</taxon>
        <taxon>Nitrosomonadaceae</taxon>
        <taxon>Nitrosomonas</taxon>
    </lineage>
</organism>
<evidence type="ECO:0000255" key="1">
    <source>
        <dbReference type="HAMAP-Rule" id="MF_01347"/>
    </source>
</evidence>
<reference key="1">
    <citation type="journal article" date="2003" name="J. Bacteriol.">
        <title>Complete genome sequence of the ammonia-oxidizing bacterium and obligate chemolithoautotroph Nitrosomonas europaea.</title>
        <authorList>
            <person name="Chain P."/>
            <person name="Lamerdin J.E."/>
            <person name="Larimer F.W."/>
            <person name="Regala W."/>
            <person name="Lao V."/>
            <person name="Land M.L."/>
            <person name="Hauser L."/>
            <person name="Hooper A.B."/>
            <person name="Klotz M.G."/>
            <person name="Norton J."/>
            <person name="Sayavedra-Soto L.A."/>
            <person name="Arciero D.M."/>
            <person name="Hommes N.G."/>
            <person name="Whittaker M.M."/>
            <person name="Arp D.J."/>
        </authorList>
    </citation>
    <scope>NUCLEOTIDE SEQUENCE [LARGE SCALE GENOMIC DNA]</scope>
    <source>
        <strain>ATCC 19718 / CIP 103999 / KCTC 2705 / NBRC 14298</strain>
    </source>
</reference>
<sequence>MSHQGKIVQCIGAVIDVEFTPGEIPKVYDALVMEGSELTLEVQQQLGDGVVRTIALGSSDGLRRGMMVTNTQKQISVPVGTKTLGRIMDVLGRPIDEMGEIGANSLMPIHRAAPAFDELSASTELLETGIKVIDLVCPFAKGGKIGLFGGAGVGKTVNMMELIRNIAIEHSGYSVFAGVGERTREGNDFYHEMKDSNVLDKVALVYGQMNEPPGNRLRVALTGLTMAEAFRDEGRDVLFFVDNIYRYTLAGTEVSALLGRMPSAVGYQPTLAEEMGRLQERITSSKTGSITSIQAVYVPADDLTDPSPATTFGHLDATVVLSRDIASLGIYPAVDPLDSTSRQLDPLIIGEDHYNTAREVQQTLQRYKELRDIIAILGMDELSPEDKLSVSRARKIQRFLSQPFFVAEVFTGSPGKYVPLKETIKGFKGIVSGEYDDIPEQAFYMVGGIEEVLEKAKSIQ</sequence>
<comment type="function">
    <text evidence="1">Produces ATP from ADP in the presence of a proton gradient across the membrane. The catalytic sites are hosted primarily by the beta subunits.</text>
</comment>
<comment type="catalytic activity">
    <reaction evidence="1">
        <text>ATP + H2O + 4 H(+)(in) = ADP + phosphate + 5 H(+)(out)</text>
        <dbReference type="Rhea" id="RHEA:57720"/>
        <dbReference type="ChEBI" id="CHEBI:15377"/>
        <dbReference type="ChEBI" id="CHEBI:15378"/>
        <dbReference type="ChEBI" id="CHEBI:30616"/>
        <dbReference type="ChEBI" id="CHEBI:43474"/>
        <dbReference type="ChEBI" id="CHEBI:456216"/>
        <dbReference type="EC" id="7.1.2.2"/>
    </reaction>
</comment>
<comment type="subunit">
    <text evidence="1">F-type ATPases have 2 components, CF(1) - the catalytic core - and CF(0) - the membrane proton channel. CF(1) has five subunits: alpha(3), beta(3), gamma(1), delta(1), epsilon(1). CF(0) has three main subunits: a(1), b(2) and c(9-12). The alpha and beta chains form an alternating ring which encloses part of the gamma chain. CF(1) is attached to CF(0) by a central stalk formed by the gamma and epsilon chains, while a peripheral stalk is formed by the delta and b chains.</text>
</comment>
<comment type="subcellular location">
    <subcellularLocation>
        <location evidence="1">Cell inner membrane</location>
        <topology evidence="1">Peripheral membrane protein</topology>
    </subcellularLocation>
</comment>
<comment type="similarity">
    <text evidence="1">Belongs to the ATPase alpha/beta chains family.</text>
</comment>
<keyword id="KW-0066">ATP synthesis</keyword>
<keyword id="KW-0067">ATP-binding</keyword>
<keyword id="KW-0997">Cell inner membrane</keyword>
<keyword id="KW-1003">Cell membrane</keyword>
<keyword id="KW-0139">CF(1)</keyword>
<keyword id="KW-0375">Hydrogen ion transport</keyword>
<keyword id="KW-0406">Ion transport</keyword>
<keyword id="KW-0472">Membrane</keyword>
<keyword id="KW-0547">Nucleotide-binding</keyword>
<keyword id="KW-1185">Reference proteome</keyword>
<keyword id="KW-1278">Translocase</keyword>
<keyword id="KW-0813">Transport</keyword>
<accession>Q82XP8</accession>
<protein>
    <recommendedName>
        <fullName evidence="1">ATP synthase subunit beta</fullName>
        <ecNumber evidence="1">7.1.2.2</ecNumber>
    </recommendedName>
    <alternativeName>
        <fullName evidence="1">ATP synthase F1 sector subunit beta</fullName>
    </alternativeName>
    <alternativeName>
        <fullName evidence="1">F-ATPase subunit beta</fullName>
    </alternativeName>
</protein>
<proteinExistence type="inferred from homology"/>
<gene>
    <name evidence="1" type="primary">atpD</name>
    <name type="ordered locus">NE0206</name>
</gene>
<feature type="chain" id="PRO_0000254318" description="ATP synthase subunit beta">
    <location>
        <begin position="1"/>
        <end position="460"/>
    </location>
</feature>
<feature type="binding site" evidence="1">
    <location>
        <begin position="149"/>
        <end position="156"/>
    </location>
    <ligand>
        <name>ATP</name>
        <dbReference type="ChEBI" id="CHEBI:30616"/>
    </ligand>
</feature>
<name>ATPB_NITEU</name>